<evidence type="ECO:0000250" key="1"/>
<evidence type="ECO:0000250" key="2">
    <source>
        <dbReference type="UniProtKB" id="P50150"/>
    </source>
</evidence>
<evidence type="ECO:0000250" key="3">
    <source>
        <dbReference type="UniProtKB" id="P50153"/>
    </source>
</evidence>
<evidence type="ECO:0000305" key="4"/>
<name>GBG4_PONAB</name>
<protein>
    <recommendedName>
        <fullName>Guanine nucleotide-binding protein G(I)/G(S)/G(O) subunit gamma-4</fullName>
    </recommendedName>
</protein>
<proteinExistence type="inferred from homology"/>
<gene>
    <name type="primary">GNG4</name>
</gene>
<keyword id="KW-1003">Cell membrane</keyword>
<keyword id="KW-0449">Lipoprotein</keyword>
<keyword id="KW-0472">Membrane</keyword>
<keyword id="KW-0488">Methylation</keyword>
<keyword id="KW-0636">Prenylation</keyword>
<keyword id="KW-1185">Reference proteome</keyword>
<keyword id="KW-0807">Transducer</keyword>
<sequence>MKEGMSNNSTTSISQARKAVEQLKMEACMDRVKVSQAAADLLAYCEAHVREDPLIIPVPASENPFREKKFFCTIL</sequence>
<organism>
    <name type="scientific">Pongo abelii</name>
    <name type="common">Sumatran orangutan</name>
    <name type="synonym">Pongo pygmaeus abelii</name>
    <dbReference type="NCBI Taxonomy" id="9601"/>
    <lineage>
        <taxon>Eukaryota</taxon>
        <taxon>Metazoa</taxon>
        <taxon>Chordata</taxon>
        <taxon>Craniata</taxon>
        <taxon>Vertebrata</taxon>
        <taxon>Euteleostomi</taxon>
        <taxon>Mammalia</taxon>
        <taxon>Eutheria</taxon>
        <taxon>Euarchontoglires</taxon>
        <taxon>Primates</taxon>
        <taxon>Haplorrhini</taxon>
        <taxon>Catarrhini</taxon>
        <taxon>Hominidae</taxon>
        <taxon>Pongo</taxon>
    </lineage>
</organism>
<accession>Q5R639</accession>
<dbReference type="EMBL" id="CR860657">
    <property type="protein sequence ID" value="CAH92777.1"/>
    <property type="molecule type" value="mRNA"/>
</dbReference>
<dbReference type="RefSeq" id="NP_001128978.1">
    <property type="nucleotide sequence ID" value="NM_001135506.1"/>
</dbReference>
<dbReference type="RefSeq" id="XP_024098621.1">
    <property type="nucleotide sequence ID" value="XM_024242853.3"/>
</dbReference>
<dbReference type="RefSeq" id="XP_054403742.1">
    <property type="nucleotide sequence ID" value="XM_054547767.2"/>
</dbReference>
<dbReference type="SMR" id="Q5R639"/>
<dbReference type="FunCoup" id="Q5R639">
    <property type="interactions" value="1374"/>
</dbReference>
<dbReference type="STRING" id="9601.ENSPPYP00000000094"/>
<dbReference type="Ensembl" id="ENSPPYT00000059360.1">
    <property type="protein sequence ID" value="ENSPPYP00000025681.1"/>
    <property type="gene ID" value="ENSPPYG00000034134.1"/>
</dbReference>
<dbReference type="GeneID" id="100190818"/>
<dbReference type="KEGG" id="pon:100190818"/>
<dbReference type="CTD" id="2786"/>
<dbReference type="eggNOG" id="KOG4119">
    <property type="taxonomic scope" value="Eukaryota"/>
</dbReference>
<dbReference type="GeneTree" id="ENSGT01100000263497"/>
<dbReference type="HOGENOM" id="CLU_168377_0_1_1"/>
<dbReference type="InParanoid" id="Q5R639"/>
<dbReference type="OMA" id="TFACFRG"/>
<dbReference type="OrthoDB" id="6264244at2759"/>
<dbReference type="TreeFam" id="TF319909"/>
<dbReference type="Proteomes" id="UP000001595">
    <property type="component" value="Chromosome 1"/>
</dbReference>
<dbReference type="GO" id="GO:0005834">
    <property type="term" value="C:heterotrimeric G-protein complex"/>
    <property type="evidence" value="ECO:0007669"/>
    <property type="project" value="InterPro"/>
</dbReference>
<dbReference type="GO" id="GO:0045202">
    <property type="term" value="C:synapse"/>
    <property type="evidence" value="ECO:0007669"/>
    <property type="project" value="Ensembl"/>
</dbReference>
<dbReference type="GO" id="GO:0031681">
    <property type="term" value="F:G-protein beta-subunit binding"/>
    <property type="evidence" value="ECO:0007669"/>
    <property type="project" value="InterPro"/>
</dbReference>
<dbReference type="GO" id="GO:0007186">
    <property type="term" value="P:G protein-coupled receptor signaling pathway"/>
    <property type="evidence" value="ECO:0007669"/>
    <property type="project" value="InterPro"/>
</dbReference>
<dbReference type="GO" id="GO:0030308">
    <property type="term" value="P:negative regulation of cell growth"/>
    <property type="evidence" value="ECO:0007669"/>
    <property type="project" value="Ensembl"/>
</dbReference>
<dbReference type="CDD" id="cd00068">
    <property type="entry name" value="GGL"/>
    <property type="match status" value="1"/>
</dbReference>
<dbReference type="FunFam" id="4.10.260.10:FF:000001">
    <property type="entry name" value="Guanine nucleotide-binding protein subunit gamma"/>
    <property type="match status" value="1"/>
</dbReference>
<dbReference type="Gene3D" id="4.10.260.10">
    <property type="entry name" value="Transducin (heterotrimeric G protein), gamma chain"/>
    <property type="match status" value="1"/>
</dbReference>
<dbReference type="InterPro" id="IPR015898">
    <property type="entry name" value="G-protein_gamma-like_dom"/>
</dbReference>
<dbReference type="InterPro" id="IPR036284">
    <property type="entry name" value="GGL_sf"/>
</dbReference>
<dbReference type="InterPro" id="IPR001770">
    <property type="entry name" value="Gprotein-gamma"/>
</dbReference>
<dbReference type="PANTHER" id="PTHR13809">
    <property type="entry name" value="GUANINE NUCLEOTIDE-BINDING PROTEIN GAMMA SUBUNIT"/>
    <property type="match status" value="1"/>
</dbReference>
<dbReference type="Pfam" id="PF00631">
    <property type="entry name" value="G-gamma"/>
    <property type="match status" value="1"/>
</dbReference>
<dbReference type="PRINTS" id="PR00321">
    <property type="entry name" value="GPROTEING"/>
</dbReference>
<dbReference type="SMART" id="SM01224">
    <property type="entry name" value="G_gamma"/>
    <property type="match status" value="1"/>
</dbReference>
<dbReference type="SMART" id="SM00224">
    <property type="entry name" value="GGL"/>
    <property type="match status" value="1"/>
</dbReference>
<dbReference type="SUPFAM" id="SSF48670">
    <property type="entry name" value="Transducin (heterotrimeric G protein), gamma chain"/>
    <property type="match status" value="1"/>
</dbReference>
<dbReference type="PROSITE" id="PS50058">
    <property type="entry name" value="G_PROTEIN_GAMMA"/>
    <property type="match status" value="1"/>
</dbReference>
<feature type="chain" id="PRO_0000042171" description="Guanine nucleotide-binding protein G(I)/G(S)/G(O) subunit gamma-4">
    <location>
        <begin position="1"/>
        <end position="72"/>
    </location>
</feature>
<feature type="propeptide" id="PRO_0000042172" description="Removed in mature form" evidence="1">
    <location>
        <begin position="73"/>
        <end position="75"/>
    </location>
</feature>
<feature type="modified residue" description="Cysteine methyl ester" evidence="1">
    <location>
        <position position="72"/>
    </location>
</feature>
<feature type="lipid moiety-binding region" description="S-geranylgeranyl cysteine" evidence="1">
    <location>
        <position position="72"/>
    </location>
</feature>
<comment type="function">
    <text evidence="4">Guanine nucleotide-binding proteins (G proteins) are involved as a modulator or transducer in various transmembrane signaling systems. The beta and gamma chains are required for the GTPase activity, for replacement of GDP by GTP, and for G protein-effector interaction.</text>
</comment>
<comment type="subunit">
    <text evidence="2 3">G proteins are composed of 3 units, alpha, beta and gamma. Interacts with beta-1 and beta-2, but not with beta-3 (By similarity). Interacts with KCNK1 (By similarity). Interacts (via C-terminus) with KCNK2/TREK-1 (via N-terminus); this interaction confers ion selectivity to Cl(-) and L-glutamate.</text>
</comment>
<comment type="subcellular location">
    <subcellularLocation>
        <location evidence="4">Cell membrane</location>
        <topology evidence="4">Lipid-anchor</topology>
        <orientation evidence="4">Cytoplasmic side</orientation>
    </subcellularLocation>
</comment>
<comment type="similarity">
    <text evidence="4">Belongs to the G protein gamma family.</text>
</comment>
<reference key="1">
    <citation type="submission" date="2004-11" db="EMBL/GenBank/DDBJ databases">
        <authorList>
            <consortium name="The German cDNA consortium"/>
        </authorList>
    </citation>
    <scope>NUCLEOTIDE SEQUENCE [LARGE SCALE MRNA]</scope>
    <source>
        <tissue>Brain cortex</tissue>
    </source>
</reference>